<name>VKTG1_MICPY</name>
<comment type="function">
    <text evidence="1">Serine protease inhibitor.</text>
</comment>
<comment type="subcellular location">
    <subcellularLocation>
        <location>Secreted</location>
    </subcellularLocation>
</comment>
<comment type="tissue specificity">
    <text>Expressed by the venom gland.</text>
</comment>
<comment type="PTM">
    <text evidence="1">Contains three disulfide bonds.</text>
</comment>
<comment type="mass spectrometry" mass="6379.0" method="Electrospray" evidence="3"/>
<comment type="similarity">
    <text evidence="4">Belongs to the venom Kunitz-type family.</text>
</comment>
<sequence length="35" mass="3955">KVPAYCKLPPDSGPCKGHFPAFYYDPVSSYCQKFI</sequence>
<reference key="1">
    <citation type="journal article" date="2009" name="Toxicon">
        <title>Biochemical characterization of the Micrurus pyrrhocryptus venom.</title>
        <authorList>
            <person name="Dokmetjian J.C."/>
            <person name="Del Canto S."/>
            <person name="Vinzon S."/>
            <person name="de Jimenez Bonino M.B."/>
        </authorList>
    </citation>
    <scope>PROTEIN SEQUENCE</scope>
    <scope>MASS SPECTROMETRY</scope>
    <source>
        <tissue>Venom</tissue>
    </source>
</reference>
<keyword id="KW-0903">Direct protein sequencing</keyword>
<keyword id="KW-1015">Disulfide bond</keyword>
<keyword id="KW-0646">Protease inhibitor</keyword>
<keyword id="KW-0964">Secreted</keyword>
<keyword id="KW-0722">Serine protease inhibitor</keyword>
<keyword id="KW-0800">Toxin</keyword>
<protein>
    <recommendedName>
        <fullName>Kunitz-type serine protease inhibitor G1</fullName>
    </recommendedName>
</protein>
<accession>P0CAR0</accession>
<proteinExistence type="evidence at protein level"/>
<evidence type="ECO:0000250" key="1"/>
<evidence type="ECO:0000255" key="2">
    <source>
        <dbReference type="PROSITE-ProRule" id="PRU00031"/>
    </source>
</evidence>
<evidence type="ECO:0000269" key="3">
    <source>
    </source>
</evidence>
<evidence type="ECO:0000305" key="4"/>
<organism>
    <name type="scientific">Micrurus pyrrhocryptus</name>
    <name type="common">Coral snake</name>
    <dbReference type="NCBI Taxonomy" id="129468"/>
    <lineage>
        <taxon>Eukaryota</taxon>
        <taxon>Metazoa</taxon>
        <taxon>Chordata</taxon>
        <taxon>Craniata</taxon>
        <taxon>Vertebrata</taxon>
        <taxon>Euteleostomi</taxon>
        <taxon>Lepidosauria</taxon>
        <taxon>Squamata</taxon>
        <taxon>Bifurcata</taxon>
        <taxon>Unidentata</taxon>
        <taxon>Episquamata</taxon>
        <taxon>Toxicofera</taxon>
        <taxon>Serpentes</taxon>
        <taxon>Colubroidea</taxon>
        <taxon>Elapidae</taxon>
        <taxon>Elapinae</taxon>
        <taxon>Micrurus</taxon>
    </lineage>
</organism>
<dbReference type="SMR" id="P0CAR0"/>
<dbReference type="GO" id="GO:0005576">
    <property type="term" value="C:extracellular region"/>
    <property type="evidence" value="ECO:0007669"/>
    <property type="project" value="UniProtKB-SubCell"/>
</dbReference>
<dbReference type="GO" id="GO:0004867">
    <property type="term" value="F:serine-type endopeptidase inhibitor activity"/>
    <property type="evidence" value="ECO:0007669"/>
    <property type="project" value="UniProtKB-KW"/>
</dbReference>
<dbReference type="GO" id="GO:0090729">
    <property type="term" value="F:toxin activity"/>
    <property type="evidence" value="ECO:0007669"/>
    <property type="project" value="UniProtKB-KW"/>
</dbReference>
<dbReference type="Gene3D" id="4.10.410.10">
    <property type="entry name" value="Pancreatic trypsin inhibitor Kunitz domain"/>
    <property type="match status" value="1"/>
</dbReference>
<dbReference type="InterPro" id="IPR002223">
    <property type="entry name" value="Kunitz_BPTI"/>
</dbReference>
<dbReference type="InterPro" id="IPR036880">
    <property type="entry name" value="Kunitz_BPTI_sf"/>
</dbReference>
<dbReference type="Pfam" id="PF00014">
    <property type="entry name" value="Kunitz_BPTI"/>
    <property type="match status" value="1"/>
</dbReference>
<dbReference type="SUPFAM" id="SSF57362">
    <property type="entry name" value="BPTI-like"/>
    <property type="match status" value="1"/>
</dbReference>
<feature type="chain" id="PRO_0000377472" description="Kunitz-type serine protease inhibitor G1">
    <location>
        <begin position="1"/>
        <end position="35" status="greater than"/>
    </location>
</feature>
<feature type="domain" description="BPTI/Kunitz inhibitor" evidence="2">
    <location>
        <begin position="6"/>
        <end position="35" status="greater than"/>
    </location>
</feature>
<feature type="non-terminal residue">
    <location>
        <position position="35"/>
    </location>
</feature>